<gene>
    <name evidence="1" type="primary">nuoK</name>
    <name type="ordered locus">SARI_00580</name>
</gene>
<comment type="function">
    <text evidence="1">NDH-1 shuttles electrons from NADH, via FMN and iron-sulfur (Fe-S) centers, to quinones in the respiratory chain. The immediate electron acceptor for the enzyme in this species is believed to be ubiquinone. Couples the redox reaction to proton translocation (for every two electrons transferred, four hydrogen ions are translocated across the cytoplasmic membrane), and thus conserves the redox energy in a proton gradient.</text>
</comment>
<comment type="catalytic activity">
    <reaction evidence="1">
        <text>a quinone + NADH + 5 H(+)(in) = a quinol + NAD(+) + 4 H(+)(out)</text>
        <dbReference type="Rhea" id="RHEA:57888"/>
        <dbReference type="ChEBI" id="CHEBI:15378"/>
        <dbReference type="ChEBI" id="CHEBI:24646"/>
        <dbReference type="ChEBI" id="CHEBI:57540"/>
        <dbReference type="ChEBI" id="CHEBI:57945"/>
        <dbReference type="ChEBI" id="CHEBI:132124"/>
    </reaction>
</comment>
<comment type="subunit">
    <text evidence="1">NDH-1 is composed of 13 different subunits. Subunits NuoA, H, J, K, L, M, N constitute the membrane sector of the complex.</text>
</comment>
<comment type="subcellular location">
    <subcellularLocation>
        <location evidence="1">Cell inner membrane</location>
        <topology evidence="1">Multi-pass membrane protein</topology>
    </subcellularLocation>
</comment>
<comment type="similarity">
    <text evidence="1">Belongs to the complex I subunit 4L family.</text>
</comment>
<proteinExistence type="inferred from homology"/>
<dbReference type="EC" id="7.1.1.-" evidence="1"/>
<dbReference type="EMBL" id="CP000880">
    <property type="protein sequence ID" value="ABX20506.1"/>
    <property type="molecule type" value="Genomic_DNA"/>
</dbReference>
<dbReference type="SMR" id="A9MJA6"/>
<dbReference type="STRING" id="41514.SARI_00580"/>
<dbReference type="KEGG" id="ses:SARI_00580"/>
<dbReference type="HOGENOM" id="CLU_144724_0_1_6"/>
<dbReference type="Proteomes" id="UP000002084">
    <property type="component" value="Chromosome"/>
</dbReference>
<dbReference type="GO" id="GO:0030964">
    <property type="term" value="C:NADH dehydrogenase complex"/>
    <property type="evidence" value="ECO:0007669"/>
    <property type="project" value="TreeGrafter"/>
</dbReference>
<dbReference type="GO" id="GO:0005886">
    <property type="term" value="C:plasma membrane"/>
    <property type="evidence" value="ECO:0007669"/>
    <property type="project" value="UniProtKB-SubCell"/>
</dbReference>
<dbReference type="GO" id="GO:0050136">
    <property type="term" value="F:NADH:ubiquinone reductase (non-electrogenic) activity"/>
    <property type="evidence" value="ECO:0007669"/>
    <property type="project" value="UniProtKB-UniRule"/>
</dbReference>
<dbReference type="GO" id="GO:0048038">
    <property type="term" value="F:quinone binding"/>
    <property type="evidence" value="ECO:0007669"/>
    <property type="project" value="UniProtKB-KW"/>
</dbReference>
<dbReference type="GO" id="GO:0042773">
    <property type="term" value="P:ATP synthesis coupled electron transport"/>
    <property type="evidence" value="ECO:0007669"/>
    <property type="project" value="InterPro"/>
</dbReference>
<dbReference type="FunFam" id="1.10.287.3510:FF:000001">
    <property type="entry name" value="NADH-quinone oxidoreductase subunit K"/>
    <property type="match status" value="1"/>
</dbReference>
<dbReference type="Gene3D" id="1.10.287.3510">
    <property type="match status" value="1"/>
</dbReference>
<dbReference type="HAMAP" id="MF_01456">
    <property type="entry name" value="NDH1_NuoK"/>
    <property type="match status" value="1"/>
</dbReference>
<dbReference type="InterPro" id="IPR001133">
    <property type="entry name" value="NADH_UbQ_OxRdtase_chain4L/K"/>
</dbReference>
<dbReference type="InterPro" id="IPR039428">
    <property type="entry name" value="NUOK/Mnh_C1-like"/>
</dbReference>
<dbReference type="NCBIfam" id="NF004319">
    <property type="entry name" value="PRK05715.1-1"/>
    <property type="match status" value="1"/>
</dbReference>
<dbReference type="NCBIfam" id="NF004320">
    <property type="entry name" value="PRK05715.1-2"/>
    <property type="match status" value="1"/>
</dbReference>
<dbReference type="PANTHER" id="PTHR11434:SF16">
    <property type="entry name" value="NADH-UBIQUINONE OXIDOREDUCTASE CHAIN 4L"/>
    <property type="match status" value="1"/>
</dbReference>
<dbReference type="PANTHER" id="PTHR11434">
    <property type="entry name" value="NADH-UBIQUINONE OXIDOREDUCTASE SUBUNIT ND4L"/>
    <property type="match status" value="1"/>
</dbReference>
<dbReference type="Pfam" id="PF00420">
    <property type="entry name" value="Oxidored_q2"/>
    <property type="match status" value="1"/>
</dbReference>
<organism>
    <name type="scientific">Salmonella arizonae (strain ATCC BAA-731 / CDC346-86 / RSK2980)</name>
    <dbReference type="NCBI Taxonomy" id="41514"/>
    <lineage>
        <taxon>Bacteria</taxon>
        <taxon>Pseudomonadati</taxon>
        <taxon>Pseudomonadota</taxon>
        <taxon>Gammaproteobacteria</taxon>
        <taxon>Enterobacterales</taxon>
        <taxon>Enterobacteriaceae</taxon>
        <taxon>Salmonella</taxon>
    </lineage>
</organism>
<accession>A9MJA6</accession>
<evidence type="ECO:0000255" key="1">
    <source>
        <dbReference type="HAMAP-Rule" id="MF_01456"/>
    </source>
</evidence>
<reference key="1">
    <citation type="submission" date="2007-11" db="EMBL/GenBank/DDBJ databases">
        <authorList>
            <consortium name="The Salmonella enterica serovar Arizonae Genome Sequencing Project"/>
            <person name="McClelland M."/>
            <person name="Sanderson E.K."/>
            <person name="Porwollik S."/>
            <person name="Spieth J."/>
            <person name="Clifton W.S."/>
            <person name="Fulton R."/>
            <person name="Chunyan W."/>
            <person name="Wollam A."/>
            <person name="Shah N."/>
            <person name="Pepin K."/>
            <person name="Bhonagiri V."/>
            <person name="Nash W."/>
            <person name="Johnson M."/>
            <person name="Thiruvilangam P."/>
            <person name="Wilson R."/>
        </authorList>
    </citation>
    <scope>NUCLEOTIDE SEQUENCE [LARGE SCALE GENOMIC DNA]</scope>
    <source>
        <strain>ATCC BAA-731 / CDC346-86 / RSK2980</strain>
    </source>
</reference>
<protein>
    <recommendedName>
        <fullName evidence="1">NADH-quinone oxidoreductase subunit K</fullName>
        <ecNumber evidence="1">7.1.1.-</ecNumber>
    </recommendedName>
    <alternativeName>
        <fullName evidence="1">NADH dehydrogenase I subunit K</fullName>
    </alternativeName>
    <alternativeName>
        <fullName evidence="1">NDH-1 subunit K</fullName>
    </alternativeName>
</protein>
<keyword id="KW-0997">Cell inner membrane</keyword>
<keyword id="KW-1003">Cell membrane</keyword>
<keyword id="KW-0472">Membrane</keyword>
<keyword id="KW-0520">NAD</keyword>
<keyword id="KW-0874">Quinone</keyword>
<keyword id="KW-1185">Reference proteome</keyword>
<keyword id="KW-1278">Translocase</keyword>
<keyword id="KW-0812">Transmembrane</keyword>
<keyword id="KW-1133">Transmembrane helix</keyword>
<keyword id="KW-0813">Transport</keyword>
<keyword id="KW-0830">Ubiquinone</keyword>
<sequence length="100" mass="10845">MIPLQHGLILAAILFVLGLTGLVIRRNLLFMLIGLEIMINASALAFVVAGSYWGQTDGQVMYILAISLAAAEASIGLALLLQLHRRRQNLNIDSVSEMRG</sequence>
<feature type="chain" id="PRO_0000390220" description="NADH-quinone oxidoreductase subunit K">
    <location>
        <begin position="1"/>
        <end position="100"/>
    </location>
</feature>
<feature type="transmembrane region" description="Helical" evidence="1">
    <location>
        <begin position="4"/>
        <end position="24"/>
    </location>
</feature>
<feature type="transmembrane region" description="Helical" evidence="1">
    <location>
        <begin position="28"/>
        <end position="48"/>
    </location>
</feature>
<feature type="transmembrane region" description="Helical" evidence="1">
    <location>
        <begin position="60"/>
        <end position="80"/>
    </location>
</feature>
<name>NUOK_SALAR</name>